<sequence>MTDIAVAEQTTKLIGPGRLVLVVGPSGAGKDTLINAARTLCADDPAIVFARRVVTREASAAEDNLQVTPDDFSRLEAAGDFALHWRAHGHAYGLPRGLDDDIRAGRTVVANVSRMVIDPARSAYANVVVVLITAPAEVLAARIAARARASDGSITDRVGRSVAAHPDVTISNVGDPIAHARDLLEIIRHGRPQP</sequence>
<organism>
    <name type="scientific">Rhodopseudomonas palustris (strain ATCC BAA-98 / CGA009)</name>
    <dbReference type="NCBI Taxonomy" id="258594"/>
    <lineage>
        <taxon>Bacteria</taxon>
        <taxon>Pseudomonadati</taxon>
        <taxon>Pseudomonadota</taxon>
        <taxon>Alphaproteobacteria</taxon>
        <taxon>Hyphomicrobiales</taxon>
        <taxon>Nitrobacteraceae</taxon>
        <taxon>Rhodopseudomonas</taxon>
    </lineage>
</organism>
<proteinExistence type="inferred from homology"/>
<dbReference type="EC" id="2.7.4.23" evidence="1"/>
<dbReference type="EMBL" id="BX572595">
    <property type="protein sequence ID" value="CAE26132.1"/>
    <property type="molecule type" value="Genomic_DNA"/>
</dbReference>
<dbReference type="RefSeq" id="WP_011156255.1">
    <property type="nucleotide sequence ID" value="NZ_CP116810.1"/>
</dbReference>
<dbReference type="SMR" id="Q6NBY8"/>
<dbReference type="STRING" id="258594.RPA0688"/>
<dbReference type="GeneID" id="66891702"/>
<dbReference type="eggNOG" id="COG3709">
    <property type="taxonomic scope" value="Bacteria"/>
</dbReference>
<dbReference type="HOGENOM" id="CLU_102477_0_0_5"/>
<dbReference type="PhylomeDB" id="Q6NBY8"/>
<dbReference type="UniPathway" id="UPA00087">
    <property type="reaction ID" value="UER00175"/>
</dbReference>
<dbReference type="GO" id="GO:0005524">
    <property type="term" value="F:ATP binding"/>
    <property type="evidence" value="ECO:0007669"/>
    <property type="project" value="UniProtKB-KW"/>
</dbReference>
<dbReference type="GO" id="GO:0033863">
    <property type="term" value="F:ribose 1,5-bisphosphate phosphokinase activity"/>
    <property type="evidence" value="ECO:0007669"/>
    <property type="project" value="UniProtKB-UniRule"/>
</dbReference>
<dbReference type="GO" id="GO:0006015">
    <property type="term" value="P:5-phosphoribose 1-diphosphate biosynthetic process"/>
    <property type="evidence" value="ECO:0007669"/>
    <property type="project" value="UniProtKB-UniRule"/>
</dbReference>
<dbReference type="GO" id="GO:0019634">
    <property type="term" value="P:organic phosphonate metabolic process"/>
    <property type="evidence" value="ECO:0007669"/>
    <property type="project" value="UniProtKB-UniRule"/>
</dbReference>
<dbReference type="Gene3D" id="3.40.50.300">
    <property type="entry name" value="P-loop containing nucleotide triphosphate hydrolases"/>
    <property type="match status" value="1"/>
</dbReference>
<dbReference type="HAMAP" id="MF_00836">
    <property type="entry name" value="PhnN"/>
    <property type="match status" value="1"/>
</dbReference>
<dbReference type="InterPro" id="IPR008145">
    <property type="entry name" value="GK/Ca_channel_bsu"/>
</dbReference>
<dbReference type="InterPro" id="IPR027417">
    <property type="entry name" value="P-loop_NTPase"/>
</dbReference>
<dbReference type="InterPro" id="IPR012699">
    <property type="entry name" value="PhnN"/>
</dbReference>
<dbReference type="NCBIfam" id="TIGR02322">
    <property type="entry name" value="phosphon_PhnN"/>
    <property type="match status" value="1"/>
</dbReference>
<dbReference type="Pfam" id="PF13671">
    <property type="entry name" value="AAA_33"/>
    <property type="match status" value="1"/>
</dbReference>
<dbReference type="SMART" id="SM00072">
    <property type="entry name" value="GuKc"/>
    <property type="match status" value="1"/>
</dbReference>
<dbReference type="SUPFAM" id="SSF52540">
    <property type="entry name" value="P-loop containing nucleoside triphosphate hydrolases"/>
    <property type="match status" value="1"/>
</dbReference>
<gene>
    <name evidence="1" type="primary">phnN</name>
    <name type="ordered locus">RPA0688</name>
</gene>
<feature type="chain" id="PRO_0000412798" description="Ribose 1,5-bisphosphate phosphokinase PhnN">
    <location>
        <begin position="1"/>
        <end position="194"/>
    </location>
</feature>
<feature type="binding site" evidence="1">
    <location>
        <begin position="24"/>
        <end position="31"/>
    </location>
    <ligand>
        <name>ATP</name>
        <dbReference type="ChEBI" id="CHEBI:30616"/>
    </ligand>
</feature>
<keyword id="KW-0067">ATP-binding</keyword>
<keyword id="KW-0547">Nucleotide-binding</keyword>
<keyword id="KW-0808">Transferase</keyword>
<evidence type="ECO:0000255" key="1">
    <source>
        <dbReference type="HAMAP-Rule" id="MF_00836"/>
    </source>
</evidence>
<name>PHNN_RHOPA</name>
<accession>Q6NBY8</accession>
<comment type="function">
    <text evidence="1">Catalyzes the phosphorylation of ribose 1,5-bisphosphate to 5-phospho-D-ribosyl alpha-1-diphosphate (PRPP).</text>
</comment>
<comment type="catalytic activity">
    <reaction evidence="1">
        <text>alpha-D-ribose 1,5-bisphosphate + ATP = 5-phospho-alpha-D-ribose 1-diphosphate + ADP</text>
        <dbReference type="Rhea" id="RHEA:20109"/>
        <dbReference type="ChEBI" id="CHEBI:30616"/>
        <dbReference type="ChEBI" id="CHEBI:58017"/>
        <dbReference type="ChEBI" id="CHEBI:68688"/>
        <dbReference type="ChEBI" id="CHEBI:456216"/>
        <dbReference type="EC" id="2.7.4.23"/>
    </reaction>
</comment>
<comment type="pathway">
    <text evidence="1">Metabolic intermediate biosynthesis; 5-phospho-alpha-D-ribose 1-diphosphate biosynthesis; 5-phospho-alpha-D-ribose 1-diphosphate from D-ribose 5-phosphate (route II): step 3/3.</text>
</comment>
<comment type="similarity">
    <text evidence="1">Belongs to the ribose 1,5-bisphosphokinase family.</text>
</comment>
<protein>
    <recommendedName>
        <fullName evidence="1">Ribose 1,5-bisphosphate phosphokinase PhnN</fullName>
        <ecNumber evidence="1">2.7.4.23</ecNumber>
    </recommendedName>
    <alternativeName>
        <fullName evidence="1">Ribose 1,5-bisphosphokinase</fullName>
    </alternativeName>
</protein>
<reference key="1">
    <citation type="journal article" date="2004" name="Nat. Biotechnol.">
        <title>Complete genome sequence of the metabolically versatile photosynthetic bacterium Rhodopseudomonas palustris.</title>
        <authorList>
            <person name="Larimer F.W."/>
            <person name="Chain P."/>
            <person name="Hauser L."/>
            <person name="Lamerdin J.E."/>
            <person name="Malfatti S."/>
            <person name="Do L."/>
            <person name="Land M.L."/>
            <person name="Pelletier D.A."/>
            <person name="Beatty J.T."/>
            <person name="Lang A.S."/>
            <person name="Tabita F.R."/>
            <person name="Gibson J.L."/>
            <person name="Hanson T.E."/>
            <person name="Bobst C."/>
            <person name="Torres y Torres J.L."/>
            <person name="Peres C."/>
            <person name="Harrison F.H."/>
            <person name="Gibson J."/>
            <person name="Harwood C.S."/>
        </authorList>
    </citation>
    <scope>NUCLEOTIDE SEQUENCE [LARGE SCALE GENOMIC DNA]</scope>
    <source>
        <strain>ATCC BAA-98 / CGA009</strain>
    </source>
</reference>